<organism>
    <name type="scientific">Trichlorobacter lovleyi (strain ATCC BAA-1151 / DSM 17278 / SZ)</name>
    <name type="common">Geobacter lovleyi</name>
    <dbReference type="NCBI Taxonomy" id="398767"/>
    <lineage>
        <taxon>Bacteria</taxon>
        <taxon>Pseudomonadati</taxon>
        <taxon>Thermodesulfobacteriota</taxon>
        <taxon>Desulfuromonadia</taxon>
        <taxon>Geobacterales</taxon>
        <taxon>Geobacteraceae</taxon>
        <taxon>Trichlorobacter</taxon>
    </lineage>
</organism>
<gene>
    <name evidence="1" type="primary">nfo</name>
    <name type="ordered locus">Glov_3584</name>
</gene>
<keyword id="KW-0227">DNA damage</keyword>
<keyword id="KW-0234">DNA repair</keyword>
<keyword id="KW-0255">Endonuclease</keyword>
<keyword id="KW-0378">Hydrolase</keyword>
<keyword id="KW-0479">Metal-binding</keyword>
<keyword id="KW-0540">Nuclease</keyword>
<keyword id="KW-1185">Reference proteome</keyword>
<keyword id="KW-0862">Zinc</keyword>
<feature type="chain" id="PRO_1000096885" description="Probable endonuclease 4">
    <location>
        <begin position="1"/>
        <end position="281"/>
    </location>
</feature>
<feature type="binding site" evidence="1">
    <location>
        <position position="68"/>
    </location>
    <ligand>
        <name>Zn(2+)</name>
        <dbReference type="ChEBI" id="CHEBI:29105"/>
        <label>1</label>
    </ligand>
</feature>
<feature type="binding site" evidence="1">
    <location>
        <position position="108"/>
    </location>
    <ligand>
        <name>Zn(2+)</name>
        <dbReference type="ChEBI" id="CHEBI:29105"/>
        <label>1</label>
    </ligand>
</feature>
<feature type="binding site" evidence="1">
    <location>
        <position position="145"/>
    </location>
    <ligand>
        <name>Zn(2+)</name>
        <dbReference type="ChEBI" id="CHEBI:29105"/>
        <label>1</label>
    </ligand>
</feature>
<feature type="binding site" evidence="1">
    <location>
        <position position="145"/>
    </location>
    <ligand>
        <name>Zn(2+)</name>
        <dbReference type="ChEBI" id="CHEBI:29105"/>
        <label>2</label>
    </ligand>
</feature>
<feature type="binding site" evidence="1">
    <location>
        <position position="179"/>
    </location>
    <ligand>
        <name>Zn(2+)</name>
        <dbReference type="ChEBI" id="CHEBI:29105"/>
        <label>2</label>
    </ligand>
</feature>
<feature type="binding site" evidence="1">
    <location>
        <position position="182"/>
    </location>
    <ligand>
        <name>Zn(2+)</name>
        <dbReference type="ChEBI" id="CHEBI:29105"/>
        <label>3</label>
    </ligand>
</feature>
<feature type="binding site" evidence="1">
    <location>
        <position position="216"/>
    </location>
    <ligand>
        <name>Zn(2+)</name>
        <dbReference type="ChEBI" id="CHEBI:29105"/>
        <label>2</label>
    </ligand>
</feature>
<feature type="binding site" evidence="1">
    <location>
        <position position="229"/>
    </location>
    <ligand>
        <name>Zn(2+)</name>
        <dbReference type="ChEBI" id="CHEBI:29105"/>
        <label>3</label>
    </ligand>
</feature>
<feature type="binding site" evidence="1">
    <location>
        <position position="231"/>
    </location>
    <ligand>
        <name>Zn(2+)</name>
        <dbReference type="ChEBI" id="CHEBI:29105"/>
        <label>3</label>
    </ligand>
</feature>
<feature type="binding site" evidence="1">
    <location>
        <position position="261"/>
    </location>
    <ligand>
        <name>Zn(2+)</name>
        <dbReference type="ChEBI" id="CHEBI:29105"/>
        <label>2</label>
    </ligand>
</feature>
<dbReference type="EC" id="3.1.21.2" evidence="1"/>
<dbReference type="EMBL" id="CP001089">
    <property type="protein sequence ID" value="ACD97285.1"/>
    <property type="molecule type" value="Genomic_DNA"/>
</dbReference>
<dbReference type="RefSeq" id="WP_012471603.1">
    <property type="nucleotide sequence ID" value="NC_010814.1"/>
</dbReference>
<dbReference type="SMR" id="B3E325"/>
<dbReference type="STRING" id="398767.Glov_3584"/>
<dbReference type="KEGG" id="glo:Glov_3584"/>
<dbReference type="eggNOG" id="COG0648">
    <property type="taxonomic scope" value="Bacteria"/>
</dbReference>
<dbReference type="HOGENOM" id="CLU_025885_0_1_7"/>
<dbReference type="OrthoDB" id="9805666at2"/>
<dbReference type="Proteomes" id="UP000002420">
    <property type="component" value="Chromosome"/>
</dbReference>
<dbReference type="GO" id="GO:0008833">
    <property type="term" value="F:deoxyribonuclease IV (phage-T4-induced) activity"/>
    <property type="evidence" value="ECO:0007669"/>
    <property type="project" value="UniProtKB-UniRule"/>
</dbReference>
<dbReference type="GO" id="GO:0003677">
    <property type="term" value="F:DNA binding"/>
    <property type="evidence" value="ECO:0007669"/>
    <property type="project" value="InterPro"/>
</dbReference>
<dbReference type="GO" id="GO:0003906">
    <property type="term" value="F:DNA-(apurinic or apyrimidinic site) endonuclease activity"/>
    <property type="evidence" value="ECO:0007669"/>
    <property type="project" value="TreeGrafter"/>
</dbReference>
<dbReference type="GO" id="GO:0008081">
    <property type="term" value="F:phosphoric diester hydrolase activity"/>
    <property type="evidence" value="ECO:0007669"/>
    <property type="project" value="TreeGrafter"/>
</dbReference>
<dbReference type="GO" id="GO:0008270">
    <property type="term" value="F:zinc ion binding"/>
    <property type="evidence" value="ECO:0007669"/>
    <property type="project" value="UniProtKB-UniRule"/>
</dbReference>
<dbReference type="GO" id="GO:0006284">
    <property type="term" value="P:base-excision repair"/>
    <property type="evidence" value="ECO:0007669"/>
    <property type="project" value="TreeGrafter"/>
</dbReference>
<dbReference type="CDD" id="cd00019">
    <property type="entry name" value="AP2Ec"/>
    <property type="match status" value="1"/>
</dbReference>
<dbReference type="FunFam" id="3.20.20.150:FF:000001">
    <property type="entry name" value="Probable endonuclease 4"/>
    <property type="match status" value="1"/>
</dbReference>
<dbReference type="Gene3D" id="3.20.20.150">
    <property type="entry name" value="Divalent-metal-dependent TIM barrel enzymes"/>
    <property type="match status" value="1"/>
</dbReference>
<dbReference type="HAMAP" id="MF_00152">
    <property type="entry name" value="Nfo"/>
    <property type="match status" value="1"/>
</dbReference>
<dbReference type="InterPro" id="IPR001719">
    <property type="entry name" value="AP_endonuc_2"/>
</dbReference>
<dbReference type="InterPro" id="IPR018246">
    <property type="entry name" value="AP_endonuc_F2_Zn_BS"/>
</dbReference>
<dbReference type="InterPro" id="IPR036237">
    <property type="entry name" value="Xyl_isomerase-like_sf"/>
</dbReference>
<dbReference type="InterPro" id="IPR013022">
    <property type="entry name" value="Xyl_isomerase-like_TIM-brl"/>
</dbReference>
<dbReference type="NCBIfam" id="TIGR00587">
    <property type="entry name" value="nfo"/>
    <property type="match status" value="1"/>
</dbReference>
<dbReference type="PANTHER" id="PTHR21445:SF0">
    <property type="entry name" value="APURINIC-APYRIMIDINIC ENDONUCLEASE"/>
    <property type="match status" value="1"/>
</dbReference>
<dbReference type="PANTHER" id="PTHR21445">
    <property type="entry name" value="ENDONUCLEASE IV ENDODEOXYRIBONUCLEASE IV"/>
    <property type="match status" value="1"/>
</dbReference>
<dbReference type="Pfam" id="PF01261">
    <property type="entry name" value="AP_endonuc_2"/>
    <property type="match status" value="1"/>
</dbReference>
<dbReference type="SMART" id="SM00518">
    <property type="entry name" value="AP2Ec"/>
    <property type="match status" value="1"/>
</dbReference>
<dbReference type="SUPFAM" id="SSF51658">
    <property type="entry name" value="Xylose isomerase-like"/>
    <property type="match status" value="1"/>
</dbReference>
<dbReference type="PROSITE" id="PS00729">
    <property type="entry name" value="AP_NUCLEASE_F2_1"/>
    <property type="match status" value="1"/>
</dbReference>
<dbReference type="PROSITE" id="PS00730">
    <property type="entry name" value="AP_NUCLEASE_F2_2"/>
    <property type="match status" value="1"/>
</dbReference>
<dbReference type="PROSITE" id="PS00731">
    <property type="entry name" value="AP_NUCLEASE_F2_3"/>
    <property type="match status" value="1"/>
</dbReference>
<dbReference type="PROSITE" id="PS51432">
    <property type="entry name" value="AP_NUCLEASE_F2_4"/>
    <property type="match status" value="1"/>
</dbReference>
<reference key="1">
    <citation type="submission" date="2008-05" db="EMBL/GenBank/DDBJ databases">
        <title>Complete sequence of chromosome of Geobacter lovleyi SZ.</title>
        <authorList>
            <consortium name="US DOE Joint Genome Institute"/>
            <person name="Lucas S."/>
            <person name="Copeland A."/>
            <person name="Lapidus A."/>
            <person name="Glavina del Rio T."/>
            <person name="Dalin E."/>
            <person name="Tice H."/>
            <person name="Bruce D."/>
            <person name="Goodwin L."/>
            <person name="Pitluck S."/>
            <person name="Chertkov O."/>
            <person name="Meincke L."/>
            <person name="Brettin T."/>
            <person name="Detter J.C."/>
            <person name="Han C."/>
            <person name="Tapia R."/>
            <person name="Kuske C.R."/>
            <person name="Schmutz J."/>
            <person name="Larimer F."/>
            <person name="Land M."/>
            <person name="Hauser L."/>
            <person name="Kyrpides N."/>
            <person name="Mikhailova N."/>
            <person name="Sung Y."/>
            <person name="Fletcher K.E."/>
            <person name="Ritalahti K.M."/>
            <person name="Loeffler F.E."/>
            <person name="Richardson P."/>
        </authorList>
    </citation>
    <scope>NUCLEOTIDE SEQUENCE [LARGE SCALE GENOMIC DNA]</scope>
    <source>
        <strain>ATCC BAA-1151 / DSM 17278 / SZ</strain>
    </source>
</reference>
<proteinExistence type="inferred from homology"/>
<sequence>MSDYLGAHMSIAGGLHKSVERAVAAGCGTLQIFTRSSNQWKGKPVSDKDADLFRSSFAASGLHEVISHDIYLINLAAPAGDTRDKSLAAFGDEMATCARLGINKIVMHPGSHTTDSPEAGLERVISAFDQLFEQTPEYEGLVLLETTAGQGTNLGRTFEELQTIINGSKYPDRFGICFDTCHTFAAGYNTATPEGYADVMAQFDRLLGLERLLCFHFNDSKKGLGSRVDRHEHIGQGTLGLEPFRFIMHDPRFITVPKILETPKGDDDAMDQVNLALLRSL</sequence>
<comment type="function">
    <text evidence="1">Endonuclease IV plays a role in DNA repair. It cleaves phosphodiester bonds at apurinic or apyrimidinic (AP) sites, generating a 3'-hydroxyl group and a 5'-terminal sugar phosphate.</text>
</comment>
<comment type="catalytic activity">
    <reaction evidence="1">
        <text>Endonucleolytic cleavage to 5'-phosphooligonucleotide end-products.</text>
        <dbReference type="EC" id="3.1.21.2"/>
    </reaction>
</comment>
<comment type="cofactor">
    <cofactor evidence="1">
        <name>Zn(2+)</name>
        <dbReference type="ChEBI" id="CHEBI:29105"/>
    </cofactor>
    <text evidence="1">Binds 3 Zn(2+) ions.</text>
</comment>
<comment type="similarity">
    <text evidence="1">Belongs to the AP endonuclease 2 family.</text>
</comment>
<evidence type="ECO:0000255" key="1">
    <source>
        <dbReference type="HAMAP-Rule" id="MF_00152"/>
    </source>
</evidence>
<accession>B3E325</accession>
<protein>
    <recommendedName>
        <fullName evidence="1">Probable endonuclease 4</fullName>
        <ecNumber evidence="1">3.1.21.2</ecNumber>
    </recommendedName>
    <alternativeName>
        <fullName evidence="1">Endodeoxyribonuclease IV</fullName>
    </alternativeName>
    <alternativeName>
        <fullName evidence="1">Endonuclease IV</fullName>
    </alternativeName>
</protein>
<name>END4_TRIL1</name>